<evidence type="ECO:0000250" key="1">
    <source>
        <dbReference type="UniProtKB" id="O75460"/>
    </source>
</evidence>
<evidence type="ECO:0000250" key="2">
    <source>
        <dbReference type="UniProtKB" id="P32361"/>
    </source>
</evidence>
<evidence type="ECO:0000255" key="3"/>
<evidence type="ECO:0000255" key="4">
    <source>
        <dbReference type="PROSITE-ProRule" id="PRU00159"/>
    </source>
</evidence>
<evidence type="ECO:0000255" key="5">
    <source>
        <dbReference type="PROSITE-ProRule" id="PRU00725"/>
    </source>
</evidence>
<evidence type="ECO:0000255" key="6">
    <source>
        <dbReference type="PROSITE-ProRule" id="PRU10027"/>
    </source>
</evidence>
<evidence type="ECO:0000256" key="7">
    <source>
        <dbReference type="SAM" id="MobiDB-lite"/>
    </source>
</evidence>
<evidence type="ECO:0000269" key="8">
    <source>
    </source>
</evidence>
<evidence type="ECO:0000269" key="9">
    <source>
    </source>
</evidence>
<evidence type="ECO:0000269" key="10">
    <source>
    </source>
</evidence>
<evidence type="ECO:0000269" key="11">
    <source>
    </source>
</evidence>
<evidence type="ECO:0000269" key="12">
    <source>
    </source>
</evidence>
<evidence type="ECO:0000269" key="13">
    <source>
    </source>
</evidence>
<evidence type="ECO:0000269" key="14">
    <source>
    </source>
</evidence>
<evidence type="ECO:0000303" key="15">
    <source>
    </source>
</evidence>
<evidence type="ECO:0000303" key="16">
    <source>
    </source>
</evidence>
<evidence type="ECO:0000305" key="17"/>
<evidence type="ECO:0000312" key="18">
    <source>
        <dbReference type="MGI" id="MGI:1930134"/>
    </source>
</evidence>
<evidence type="ECO:0007744" key="19">
    <source>
        <dbReference type="PDB" id="4PL3"/>
    </source>
</evidence>
<evidence type="ECO:0007744" key="20">
    <source>
        <dbReference type="PDB" id="4PL4"/>
    </source>
</evidence>
<evidence type="ECO:0007744" key="21">
    <source>
        <dbReference type="PDB" id="4PL5"/>
    </source>
</evidence>
<evidence type="ECO:0007829" key="22">
    <source>
        <dbReference type="PDB" id="4PL3"/>
    </source>
</evidence>
<evidence type="ECO:0007829" key="23">
    <source>
        <dbReference type="PDB" id="4PL4"/>
    </source>
</evidence>
<evidence type="ECO:0007829" key="24">
    <source>
        <dbReference type="PDB" id="4PL5"/>
    </source>
</evidence>
<comment type="function">
    <text evidence="1 9 11">Serine/threonine-protein kinase and endoribonuclease that acts as a key sensor for the endoplasmic reticulum unfolded protein response (UPR) (PubMed:11850408, PubMed:25164867). In unstressed cells, the endoplasmic reticulum luminal domain is maintained in its inactive monomeric state by binding to the endoplasmic reticulum chaperone HSPA5/BiP. Accumulation of misfolded protein in the endoplasmic reticulum causes release of HSPA5/BiP, allowing the luminal domain to homodimerize, promoting autophosphorylation of the kinase domain and subsequent activation of the endoribonuclease activity (PubMed:25164867). The endoribonuclease activity is specific for XBP1 mRNA and excises 26 nucleotides from XBP1 mRNA (PubMed:11850408, PubMed:25164867). The resulting spliced transcript of XBP1 encodes a transcriptional activator protein that up-regulates expression of UPR target genes (PubMed:11850408, PubMed:25164867). Acts as an upstream signal for ER stress-induced GORASP2-mediated unconventional (ER/Golgi-independent) trafficking of CFTR to cell membrane by modulating the expression and localization of SEC16A (By similarity).</text>
</comment>
<comment type="catalytic activity">
    <reaction evidence="11">
        <text>L-seryl-[protein] + ATP = O-phospho-L-seryl-[protein] + ADP + H(+)</text>
        <dbReference type="Rhea" id="RHEA:17989"/>
        <dbReference type="Rhea" id="RHEA-COMP:9863"/>
        <dbReference type="Rhea" id="RHEA-COMP:11604"/>
        <dbReference type="ChEBI" id="CHEBI:15378"/>
        <dbReference type="ChEBI" id="CHEBI:29999"/>
        <dbReference type="ChEBI" id="CHEBI:30616"/>
        <dbReference type="ChEBI" id="CHEBI:83421"/>
        <dbReference type="ChEBI" id="CHEBI:456216"/>
        <dbReference type="EC" id="2.7.11.1"/>
    </reaction>
</comment>
<comment type="catalytic activity">
    <reaction evidence="11">
        <text>L-threonyl-[protein] + ATP = O-phospho-L-threonyl-[protein] + ADP + H(+)</text>
        <dbReference type="Rhea" id="RHEA:46608"/>
        <dbReference type="Rhea" id="RHEA-COMP:11060"/>
        <dbReference type="Rhea" id="RHEA-COMP:11605"/>
        <dbReference type="ChEBI" id="CHEBI:15378"/>
        <dbReference type="ChEBI" id="CHEBI:30013"/>
        <dbReference type="ChEBI" id="CHEBI:30616"/>
        <dbReference type="ChEBI" id="CHEBI:61977"/>
        <dbReference type="ChEBI" id="CHEBI:456216"/>
        <dbReference type="EC" id="2.7.11.1"/>
    </reaction>
</comment>
<comment type="cofactor">
    <cofactor evidence="11">
        <name>Mg(2+)</name>
        <dbReference type="ChEBI" id="CHEBI:18420"/>
    </cofactor>
</comment>
<comment type="activity regulation">
    <text evidence="11">The kinase domain is activated by trans-autophosphorylation following homodimerization. Kinase activity is required for activation of the endoribonuclease domain (PubMed:25164867). Endoribonuclease activity is specifically inhibited by hydroxy-aryl-aldehydes (HAA) MKC9989, OICR464 and OICR573 (PubMed:25164867).</text>
</comment>
<comment type="subunit">
    <text evidence="1 10 11">Monomer (By similarity). Homodimer; disulfide-linked; homodimerization takes place in response to endoplasmic reticulum stress and promotes activation of the kinase and endoribonuclease activities (PubMed:25164867). Dimer formation is driven by hydrophobic interactions within the N-terminal luminal domains and stabilized by disulfide bridges (PubMed:25164867). Interacts (via the luminal region) with DNAJB9/ERdj4; interaction takes place in unstressed cells and promotes recruitment of HSPA5/BiP (By similarity). Interacts (via the luminal region) with HSPA5/BiP; HSPA5/BiP is a negative regulator of the unfolded protein response (UPR) that prevents homodimerization of ERN1/IRE1 and subsequent activation of the protein (By similarity). Interaction with HSPA5 also competitively inhibits ERN1 interaction with MANF (By similarity). Interacts with PDIA6, a negative regulator of the UPR; the interaction is direct and disrupts homodimerization (By similarity). Interacts with DAB2IP (via PH domain); the interaction occurs in a endoplasmic reticulum stress-induced dependent manner and is required for subsequent recruitment of TRAF2 to ERN1/IRE1 (PubMed:18281285). Interacts with TAOK3 and TRAF2 (By similarity). Interacts with RNF13 (By similarity). Interacts with LACC1 (By similarity). Interacts (when unphosphorylated) with DDRGK1; interaction is dependent on UFM1 and takes place in response to endoplasmic reticulum stress, regulating ERN1/IRE1-alpha stability (By similarity). Interacts (via N-terminus) with P4HB/PDIA1; the interaction is enhanced by phosphorylation of P4HB by FAM20C in response to endoplasmic reticulum stress and results in attenuation of ERN1 activity (By similarity). Interacts with TMBIM6; this interaction inhibits ERN1 activity (By similarity). Interacts (via luminal domain) with MANF (via C-terminus); the interaction is decreased in the presence of increasing concentrations of Ca(2+) (By similarity).</text>
</comment>
<comment type="interaction">
    <interactant intactId="EBI-5480799">
        <id>Q9EQY0</id>
    </interactant>
    <interactant intactId="EBI-518014">
        <id>P25118</id>
        <label>Tnfrsf1a</label>
    </interactant>
    <organismsDiffer>false</organismsDiffer>
    <experiments>2</experiments>
</comment>
<comment type="interaction">
    <interactant intactId="EBI-5480799">
        <id>Q9EQY0</id>
    </interactant>
    <interactant intactId="EBI-448028">
        <id>P70196</id>
        <label>Traf6</label>
    </interactant>
    <organismsDiffer>false</organismsDiffer>
    <experiments>6</experiments>
</comment>
<comment type="subcellular location">
    <subcellularLocation>
        <location evidence="9">Endoplasmic reticulum membrane</location>
        <topology evidence="9">Single-pass type I membrane protein</topology>
    </subcellularLocation>
</comment>
<comment type="alternative products">
    <event type="alternative splicing"/>
    <isoform>
        <id>Q9EQY0-1</id>
        <name evidence="8">1</name>
        <sequence type="displayed"/>
    </isoform>
    <isoform>
        <id>Q9EQY0-2</id>
        <name evidence="17">2</name>
        <sequence type="described" ref="VSP_050794 VSP_050795"/>
    </isoform>
</comment>
<comment type="tissue specificity">
    <text evidence="8 12">Expressed in liver (at protein level) (PubMed:30118681). Ubiquitously expressed (PubMed:11146108). High levels in thymus, liver and lung. In the brain, preferentially expressed in cortical, hippocampal and olfactory neurons (PubMed:11146108).</text>
</comment>
<comment type="PTM">
    <text evidence="1 11 12 14">Autophosphorylated following homodimerization. Autophosphorylation promotes activation of the endoribonuclease domain (PubMed:25164867). In response to ER stress, phosphorylated at Ser-724, Ser-729 and possibly Ser-726; phosphorylation promotes oligomerization and endoribonuclease activity (PubMed:30118681). Dephosphorylated at Ser-724, Ser-729 and possibly Ser-726 by RPAP2 to abort failed ER-stress adaptation and trigger apoptosis (By similarity). Phosphorylated at Ser-724; in response to the ER stressor tunicamycin (PubMed:36739529).</text>
</comment>
<comment type="PTM">
    <text evidence="1">ADP-ribosylated by PARP16 upon ER stress, which increases both kinase and endonuclease activities.</text>
</comment>
<comment type="similarity">
    <text evidence="4">Belongs to the protein kinase superfamily. Ser/Thr protein kinase family.</text>
</comment>
<dbReference type="EC" id="2.7.11.1" evidence="11"/>
<dbReference type="EC" id="3.1.26.-" evidence="9 11"/>
<dbReference type="EMBL" id="AB031332">
    <property type="protein sequence ID" value="BAB20901.1"/>
    <property type="molecule type" value="mRNA"/>
</dbReference>
<dbReference type="EMBL" id="AK018505">
    <property type="protein sequence ID" value="BAB31243.1"/>
    <property type="molecule type" value="mRNA"/>
</dbReference>
<dbReference type="CCDS" id="CCDS25556.1">
    <molecule id="Q9EQY0-1"/>
</dbReference>
<dbReference type="RefSeq" id="NP_076402.1">
    <molecule id="Q9EQY0-1"/>
    <property type="nucleotide sequence ID" value="NM_023913.2"/>
</dbReference>
<dbReference type="PDB" id="4PL3">
    <property type="method" value="X-ray"/>
    <property type="resolution" value="2.90 A"/>
    <property type="chains" value="A/B=550-977"/>
</dbReference>
<dbReference type="PDB" id="4PL4">
    <property type="method" value="X-ray"/>
    <property type="resolution" value="3.00 A"/>
    <property type="chains" value="A/B/C/D=550-977"/>
</dbReference>
<dbReference type="PDB" id="4PL5">
    <property type="method" value="X-ray"/>
    <property type="resolution" value="3.40 A"/>
    <property type="chains" value="A/B/C/D=550-977"/>
</dbReference>
<dbReference type="PDBsum" id="4PL3"/>
<dbReference type="PDBsum" id="4PL4"/>
<dbReference type="PDBsum" id="4PL5"/>
<dbReference type="SMR" id="Q9EQY0"/>
<dbReference type="BioGRID" id="219724">
    <property type="interactions" value="4"/>
</dbReference>
<dbReference type="CORUM" id="Q9EQY0"/>
<dbReference type="FunCoup" id="Q9EQY0">
    <property type="interactions" value="1405"/>
</dbReference>
<dbReference type="IntAct" id="Q9EQY0">
    <property type="interactions" value="4"/>
</dbReference>
<dbReference type="MINT" id="Q9EQY0"/>
<dbReference type="STRING" id="10090.ENSMUSP00000001059"/>
<dbReference type="BindingDB" id="Q9EQY0"/>
<dbReference type="ChEMBL" id="CHEMBL4523450"/>
<dbReference type="GlyCosmos" id="Q9EQY0">
    <property type="glycosylation" value="1 site, No reported glycans"/>
</dbReference>
<dbReference type="GlyGen" id="Q9EQY0">
    <property type="glycosylation" value="1 site"/>
</dbReference>
<dbReference type="iPTMnet" id="Q9EQY0"/>
<dbReference type="PhosphoSitePlus" id="Q9EQY0"/>
<dbReference type="PaxDb" id="10090-ENSMUSP00000001059"/>
<dbReference type="ProteomicsDB" id="275886">
    <molecule id="Q9EQY0-1"/>
</dbReference>
<dbReference type="ProteomicsDB" id="275887">
    <molecule id="Q9EQY0-2"/>
</dbReference>
<dbReference type="Pumba" id="Q9EQY0"/>
<dbReference type="Antibodypedia" id="4011">
    <property type="antibodies" value="733 antibodies from 43 providers"/>
</dbReference>
<dbReference type="DNASU" id="78943"/>
<dbReference type="Ensembl" id="ENSMUST00000001059.9">
    <molecule id="Q9EQY0-1"/>
    <property type="protein sequence ID" value="ENSMUSP00000001059.3"/>
    <property type="gene ID" value="ENSMUSG00000020715.10"/>
</dbReference>
<dbReference type="Ensembl" id="ENSMUST00000106801.8">
    <molecule id="Q9EQY0-2"/>
    <property type="protein sequence ID" value="ENSMUSP00000102413.2"/>
    <property type="gene ID" value="ENSMUSG00000020715.10"/>
</dbReference>
<dbReference type="GeneID" id="78943"/>
<dbReference type="KEGG" id="mmu:78943"/>
<dbReference type="UCSC" id="uc007lyy.1">
    <molecule id="Q9EQY0-1"/>
    <property type="organism name" value="mouse"/>
</dbReference>
<dbReference type="AGR" id="MGI:1930134"/>
<dbReference type="CTD" id="2081"/>
<dbReference type="MGI" id="MGI:1930134">
    <property type="gene designation" value="Ern1"/>
</dbReference>
<dbReference type="VEuPathDB" id="HostDB:ENSMUSG00000020715"/>
<dbReference type="eggNOG" id="KOG1027">
    <property type="taxonomic scope" value="Eukaryota"/>
</dbReference>
<dbReference type="GeneTree" id="ENSGT00940000159761"/>
<dbReference type="HOGENOM" id="CLU_004875_1_1_1"/>
<dbReference type="InParanoid" id="Q9EQY0"/>
<dbReference type="OMA" id="NYWVERF"/>
<dbReference type="OrthoDB" id="63989at2759"/>
<dbReference type="PhylomeDB" id="Q9EQY0"/>
<dbReference type="TreeFam" id="TF313986"/>
<dbReference type="Reactome" id="R-MMU-381070">
    <property type="pathway name" value="IRE1alpha activates chaperones"/>
</dbReference>
<dbReference type="BioGRID-ORCS" id="78943">
    <property type="hits" value="8 hits in 81 CRISPR screens"/>
</dbReference>
<dbReference type="ChiTaRS" id="Ern1">
    <property type="organism name" value="mouse"/>
</dbReference>
<dbReference type="EvolutionaryTrace" id="Q9EQY0"/>
<dbReference type="PRO" id="PR:Q9EQY0"/>
<dbReference type="Proteomes" id="UP000000589">
    <property type="component" value="Chromosome 11"/>
</dbReference>
<dbReference type="RNAct" id="Q9EQY0">
    <property type="molecule type" value="protein"/>
</dbReference>
<dbReference type="Bgee" id="ENSMUSG00000020715">
    <property type="expression patterns" value="Expressed in secondary oocyte and 251 other cell types or tissues"/>
</dbReference>
<dbReference type="ExpressionAtlas" id="Q9EQY0">
    <property type="expression patterns" value="baseline and differential"/>
</dbReference>
<dbReference type="GO" id="GO:1990597">
    <property type="term" value="C:AIP1-IRE1 complex"/>
    <property type="evidence" value="ECO:0000353"/>
    <property type="project" value="ParkinsonsUK-UCL"/>
</dbReference>
<dbReference type="GO" id="GO:0005789">
    <property type="term" value="C:endoplasmic reticulum membrane"/>
    <property type="evidence" value="ECO:0000314"/>
    <property type="project" value="MGI"/>
</dbReference>
<dbReference type="GO" id="GO:1990630">
    <property type="term" value="C:IRE1-RACK1-PP2A complex"/>
    <property type="evidence" value="ECO:0007669"/>
    <property type="project" value="Ensembl"/>
</dbReference>
<dbReference type="GO" id="GO:1990604">
    <property type="term" value="C:IRE1-TRAF2-ASK1 complex"/>
    <property type="evidence" value="ECO:0007669"/>
    <property type="project" value="Ensembl"/>
</dbReference>
<dbReference type="GO" id="GO:0005739">
    <property type="term" value="C:mitochondrion"/>
    <property type="evidence" value="ECO:0000314"/>
    <property type="project" value="MGI"/>
</dbReference>
<dbReference type="GO" id="GO:0005637">
    <property type="term" value="C:nuclear inner membrane"/>
    <property type="evidence" value="ECO:0000314"/>
    <property type="project" value="UniProtKB"/>
</dbReference>
<dbReference type="GO" id="GO:0043531">
    <property type="term" value="F:ADP binding"/>
    <property type="evidence" value="ECO:0007669"/>
    <property type="project" value="Ensembl"/>
</dbReference>
<dbReference type="GO" id="GO:0005524">
    <property type="term" value="F:ATP binding"/>
    <property type="evidence" value="ECO:0000250"/>
    <property type="project" value="UniProtKB"/>
</dbReference>
<dbReference type="GO" id="GO:0004519">
    <property type="term" value="F:endonuclease activity"/>
    <property type="evidence" value="ECO:0000314"/>
    <property type="project" value="UniProtKB"/>
</dbReference>
<dbReference type="GO" id="GO:0019899">
    <property type="term" value="F:enzyme binding"/>
    <property type="evidence" value="ECO:0007669"/>
    <property type="project" value="Ensembl"/>
</dbReference>
<dbReference type="GO" id="GO:0030544">
    <property type="term" value="F:Hsp70 protein binding"/>
    <property type="evidence" value="ECO:0007669"/>
    <property type="project" value="Ensembl"/>
</dbReference>
<dbReference type="GO" id="GO:0051879">
    <property type="term" value="F:Hsp90 protein binding"/>
    <property type="evidence" value="ECO:0007669"/>
    <property type="project" value="Ensembl"/>
</dbReference>
<dbReference type="GO" id="GO:0000287">
    <property type="term" value="F:magnesium ion binding"/>
    <property type="evidence" value="ECO:0000250"/>
    <property type="project" value="UniProtKB"/>
</dbReference>
<dbReference type="GO" id="GO:0005161">
    <property type="term" value="F:platelet-derived growth factor receptor binding"/>
    <property type="evidence" value="ECO:0007669"/>
    <property type="project" value="Ensembl"/>
</dbReference>
<dbReference type="GO" id="GO:0042803">
    <property type="term" value="F:protein homodimerization activity"/>
    <property type="evidence" value="ECO:0000314"/>
    <property type="project" value="UniProtKB"/>
</dbReference>
<dbReference type="GO" id="GO:0106310">
    <property type="term" value="F:protein serine kinase activity"/>
    <property type="evidence" value="ECO:0007669"/>
    <property type="project" value="RHEA"/>
</dbReference>
<dbReference type="GO" id="GO:0004674">
    <property type="term" value="F:protein serine/threonine kinase activity"/>
    <property type="evidence" value="ECO:0000314"/>
    <property type="project" value="UniProtKB"/>
</dbReference>
<dbReference type="GO" id="GO:0004521">
    <property type="term" value="F:RNA endonuclease activity"/>
    <property type="evidence" value="ECO:0000314"/>
    <property type="project" value="UniProtKB"/>
</dbReference>
<dbReference type="GO" id="GO:0071333">
    <property type="term" value="P:cellular response to glucose stimulus"/>
    <property type="evidence" value="ECO:0007669"/>
    <property type="project" value="Ensembl"/>
</dbReference>
<dbReference type="GO" id="GO:0070301">
    <property type="term" value="P:cellular response to hydrogen peroxide"/>
    <property type="evidence" value="ECO:0007669"/>
    <property type="project" value="Ensembl"/>
</dbReference>
<dbReference type="GO" id="GO:0035924">
    <property type="term" value="P:cellular response to vascular endothelial growth factor stimulus"/>
    <property type="evidence" value="ECO:0000250"/>
    <property type="project" value="UniProtKB"/>
</dbReference>
<dbReference type="GO" id="GO:0030968">
    <property type="term" value="P:endoplasmic reticulum unfolded protein response"/>
    <property type="evidence" value="ECO:0000314"/>
    <property type="project" value="MGI"/>
</dbReference>
<dbReference type="GO" id="GO:0001935">
    <property type="term" value="P:endothelial cell proliferation"/>
    <property type="evidence" value="ECO:0000250"/>
    <property type="project" value="UniProtKB"/>
</dbReference>
<dbReference type="GO" id="GO:1901142">
    <property type="term" value="P:insulin metabolic process"/>
    <property type="evidence" value="ECO:0007669"/>
    <property type="project" value="Ensembl"/>
</dbReference>
<dbReference type="GO" id="GO:0070059">
    <property type="term" value="P:intrinsic apoptotic signaling pathway in response to endoplasmic reticulum stress"/>
    <property type="evidence" value="ECO:0000314"/>
    <property type="project" value="UniProtKB"/>
</dbReference>
<dbReference type="GO" id="GO:0036498">
    <property type="term" value="P:IRE1-mediated unfolded protein response"/>
    <property type="evidence" value="ECO:0000314"/>
    <property type="project" value="UniProtKB"/>
</dbReference>
<dbReference type="GO" id="GO:0070054">
    <property type="term" value="P:mRNA splicing, via endonucleolytic cleavage and ligation"/>
    <property type="evidence" value="ECO:0000250"/>
    <property type="project" value="UniProtKB"/>
</dbReference>
<dbReference type="GO" id="GO:0017148">
    <property type="term" value="P:negative regulation of translation"/>
    <property type="evidence" value="ECO:0000304"/>
    <property type="project" value="MGI"/>
</dbReference>
<dbReference type="GO" id="GO:1900103">
    <property type="term" value="P:positive regulation of endoplasmic reticulum unfolded protein response"/>
    <property type="evidence" value="ECO:0000250"/>
    <property type="project" value="UniProtKB"/>
</dbReference>
<dbReference type="GO" id="GO:1904294">
    <property type="term" value="P:positive regulation of ERAD pathway"/>
    <property type="evidence" value="ECO:0000304"/>
    <property type="project" value="MGI"/>
</dbReference>
<dbReference type="GO" id="GO:0043507">
    <property type="term" value="P:positive regulation of JUN kinase activity"/>
    <property type="evidence" value="ECO:0000315"/>
    <property type="project" value="ParkinsonsUK-UCL"/>
</dbReference>
<dbReference type="GO" id="GO:0033120">
    <property type="term" value="P:positive regulation of RNA splicing"/>
    <property type="evidence" value="ECO:0000314"/>
    <property type="project" value="UniProtKB"/>
</dbReference>
<dbReference type="GO" id="GO:1904707">
    <property type="term" value="P:positive regulation of vascular associated smooth muscle cell proliferation"/>
    <property type="evidence" value="ECO:0007669"/>
    <property type="project" value="Ensembl"/>
</dbReference>
<dbReference type="GO" id="GO:0046777">
    <property type="term" value="P:protein autophosphorylation"/>
    <property type="evidence" value="ECO:0000314"/>
    <property type="project" value="UniProtKB"/>
</dbReference>
<dbReference type="GO" id="GO:0006468">
    <property type="term" value="P:protein phosphorylation"/>
    <property type="evidence" value="ECO:0000250"/>
    <property type="project" value="UniProtKB"/>
</dbReference>
<dbReference type="CDD" id="cd09769">
    <property type="entry name" value="Luminal_IRE1"/>
    <property type="match status" value="1"/>
</dbReference>
<dbReference type="CDD" id="cd10422">
    <property type="entry name" value="RNase_Ire1"/>
    <property type="match status" value="1"/>
</dbReference>
<dbReference type="CDD" id="cd13982">
    <property type="entry name" value="STKc_IRE1"/>
    <property type="match status" value="1"/>
</dbReference>
<dbReference type="FunFam" id="2.130.10.10:FF:000225">
    <property type="entry name" value="Endoplasmic reticulum to nucleus-signaling 1"/>
    <property type="match status" value="1"/>
</dbReference>
<dbReference type="FunFam" id="3.30.200.20:FF:000077">
    <property type="entry name" value="Putative Serine/threonine-protein kinase/endoribonuclease IRE1"/>
    <property type="match status" value="1"/>
</dbReference>
<dbReference type="FunFam" id="1.20.1440.180:FF:000001">
    <property type="entry name" value="Serine/threonine-protein kinase/endoribonuclease IRE1"/>
    <property type="match status" value="1"/>
</dbReference>
<dbReference type="FunFam" id="1.10.510.10:FF:000215">
    <property type="entry name" value="serine/threonine-protein kinase/endoribonuclease IRE1 isoform X1"/>
    <property type="match status" value="1"/>
</dbReference>
<dbReference type="Gene3D" id="1.20.1440.180">
    <property type="entry name" value="KEN domain"/>
    <property type="match status" value="1"/>
</dbReference>
<dbReference type="Gene3D" id="3.30.200.20">
    <property type="entry name" value="Phosphorylase Kinase, domain 1"/>
    <property type="match status" value="1"/>
</dbReference>
<dbReference type="Gene3D" id="1.10.510.10">
    <property type="entry name" value="Transferase(Phosphotransferase) domain 1"/>
    <property type="match status" value="1"/>
</dbReference>
<dbReference type="Gene3D" id="2.130.10.10">
    <property type="entry name" value="YVTN repeat-like/Quinoprotein amine dehydrogenase"/>
    <property type="match status" value="1"/>
</dbReference>
<dbReference type="InterPro" id="IPR045133">
    <property type="entry name" value="IRE1/2-like"/>
</dbReference>
<dbReference type="InterPro" id="IPR010513">
    <property type="entry name" value="KEN_dom"/>
</dbReference>
<dbReference type="InterPro" id="IPR038357">
    <property type="entry name" value="KEN_sf"/>
</dbReference>
<dbReference type="InterPro" id="IPR011009">
    <property type="entry name" value="Kinase-like_dom_sf"/>
</dbReference>
<dbReference type="InterPro" id="IPR018391">
    <property type="entry name" value="PQQ_b-propeller_rpt"/>
</dbReference>
<dbReference type="InterPro" id="IPR000719">
    <property type="entry name" value="Prot_kinase_dom"/>
</dbReference>
<dbReference type="InterPro" id="IPR011047">
    <property type="entry name" value="Quinoprotein_ADH-like_sf"/>
</dbReference>
<dbReference type="InterPro" id="IPR008271">
    <property type="entry name" value="Ser/Thr_kinase_AS"/>
</dbReference>
<dbReference type="InterPro" id="IPR015943">
    <property type="entry name" value="WD40/YVTN_repeat-like_dom_sf"/>
</dbReference>
<dbReference type="PANTHER" id="PTHR13954">
    <property type="entry name" value="IRE1-RELATED"/>
    <property type="match status" value="1"/>
</dbReference>
<dbReference type="PANTHER" id="PTHR13954:SF17">
    <property type="entry name" value="SERINE_THREONINE-PROTEIN KINASE_ENDORIBONUCLEASE IRE1"/>
    <property type="match status" value="1"/>
</dbReference>
<dbReference type="Pfam" id="PF00069">
    <property type="entry name" value="Pkinase"/>
    <property type="match status" value="1"/>
</dbReference>
<dbReference type="Pfam" id="PF06479">
    <property type="entry name" value="Ribonuc_2-5A"/>
    <property type="match status" value="1"/>
</dbReference>
<dbReference type="SMART" id="SM00564">
    <property type="entry name" value="PQQ"/>
    <property type="match status" value="5"/>
</dbReference>
<dbReference type="SMART" id="SM00580">
    <property type="entry name" value="PUG"/>
    <property type="match status" value="1"/>
</dbReference>
<dbReference type="SMART" id="SM00220">
    <property type="entry name" value="S_TKc"/>
    <property type="match status" value="1"/>
</dbReference>
<dbReference type="SUPFAM" id="SSF56112">
    <property type="entry name" value="Protein kinase-like (PK-like)"/>
    <property type="match status" value="1"/>
</dbReference>
<dbReference type="SUPFAM" id="SSF50998">
    <property type="entry name" value="Quinoprotein alcohol dehydrogenase-like"/>
    <property type="match status" value="1"/>
</dbReference>
<dbReference type="PROSITE" id="PS51392">
    <property type="entry name" value="KEN"/>
    <property type="match status" value="1"/>
</dbReference>
<dbReference type="PROSITE" id="PS50011">
    <property type="entry name" value="PROTEIN_KINASE_DOM"/>
    <property type="match status" value="1"/>
</dbReference>
<dbReference type="PROSITE" id="PS00108">
    <property type="entry name" value="PROTEIN_KINASE_ST"/>
    <property type="match status" value="1"/>
</dbReference>
<sequence>MPARWLLLLLALLLPPPGPGSFGRTSTVTLPETLLFVSTLDGSLHAVSKRTGSIKWTLKEDPVLQVPTHVEEPAFLPDPNDGSLYTLGGKNNEGLTKLPFTIPELVQASPCRSSDGILYMGKKQDIWYVIDLLTGEKQQTLSSAFADSLCPSTSLLYLGRTEYTITMYDTKTRELRWNATYFDYAASLPEDDVDYKMSHFVSNGDGLVVTVDSESGDVLWIQNYASPVVAFYVWQGEVLRKVVHINVAVETLRYLTFMSGEVGRITKWKYPFPKETEAKSKLTPTLYVGKYSTSLYASPSMVHEGVAVVPRGSTLPLLEGPQTDGVTIGDKGECVITPSTDLKFDPGLKGKSKLNYLRNYWLLIGHHETPLSASTKMLERFPNNLPKHRENVIPADSEKRSFEEVINIVGQTSDNTPTTVSQDVEEKLARAPAKPEAPVDSMLKDMATIILSTFLLVGWVAFIITYPLSVHQQRQLQHQQFQKELEKIQLLQQQQLPFHPHGDLTQDPEFLDSSGPFSESSGTSSPSPSPRASNHSLHPSSSASRAGTSPSLEQDDEDEETRMVIVGKISFCPKDVLGHGAEGTIVYKGMFDNRDVAVKRILPECFSFADREVQLLRESDEHPNVIRYFCTEKDRQFQYIAIELCAATLQEYVEQKDFAHLGLEPITLLHQTTSGLAHLHSLNIVHRDLKPHNILLSMPNAHGRIKAMISDFGLCKKLAVGRHSFSRRSGVPGTEGWIAPEMLSEDCKDNPTYTVDIFSAGCVFYYVISEGNHPFGKSLQRQANILLGACNLDCFHSDKHEDVIARELIEKMIAMDPQQRPSAKHVLKHPFFWSLEKQLQFFQDVSDRIEKEALDGPIVRQLERGGRAVVKMDWRENITVPLQTDLRKFRTYKGGSVRDLLRAMRNKKHHYRELPVEVQETLGSIPDDFVRYFTSRFPHLLSHTYQAMELCRHERLFQTYYWHEPTEPQPPVIPYAL</sequence>
<keyword id="KW-0002">3D-structure</keyword>
<keyword id="KW-0013">ADP-ribosylation</keyword>
<keyword id="KW-0025">Alternative splicing</keyword>
<keyword id="KW-0053">Apoptosis</keyword>
<keyword id="KW-0067">ATP-binding</keyword>
<keyword id="KW-1015">Disulfide bond</keyword>
<keyword id="KW-0256">Endoplasmic reticulum</keyword>
<keyword id="KW-0325">Glycoprotein</keyword>
<keyword id="KW-0378">Hydrolase</keyword>
<keyword id="KW-0418">Kinase</keyword>
<keyword id="KW-0460">Magnesium</keyword>
<keyword id="KW-0472">Membrane</keyword>
<keyword id="KW-0479">Metal-binding</keyword>
<keyword id="KW-0511">Multifunctional enzyme</keyword>
<keyword id="KW-0547">Nucleotide-binding</keyword>
<keyword id="KW-0597">Phosphoprotein</keyword>
<keyword id="KW-1185">Reference proteome</keyword>
<keyword id="KW-0723">Serine/threonine-protein kinase</keyword>
<keyword id="KW-0732">Signal</keyword>
<keyword id="KW-0804">Transcription</keyword>
<keyword id="KW-0805">Transcription regulation</keyword>
<keyword id="KW-0808">Transferase</keyword>
<keyword id="KW-0812">Transmembrane</keyword>
<keyword id="KW-1133">Transmembrane helix</keyword>
<keyword id="KW-0834">Unfolded protein response</keyword>
<reference key="1">
    <citation type="journal article" date="2000" name="Brain Res. Mol. Brain Res.">
        <title>Characterization of mouse Ire1alpha: cloning, mRNA localization in the brain and functional analysis in a neural cell line.</title>
        <authorList>
            <person name="Miyoshi K."/>
            <person name="Katayama T."/>
            <person name="Imaizumi K."/>
            <person name="Taniguchi M."/>
            <person name="Mori Y."/>
            <person name="Hitomi J."/>
            <person name="Yui D."/>
            <person name="Manabe T."/>
            <person name="Gomi F."/>
            <person name="Yoneda T."/>
            <person name="Tohyama M."/>
        </authorList>
    </citation>
    <scope>NUCLEOTIDE SEQUENCE [MRNA] (ISOFORM 1)</scope>
    <scope>TISSUE SPECIFICITY</scope>
    <source>
        <strain evidence="8">C57BL/6J</strain>
        <tissue evidence="8">Brain</tissue>
    </source>
</reference>
<reference key="2">
    <citation type="journal article" date="2005" name="Science">
        <title>The transcriptional landscape of the mammalian genome.</title>
        <authorList>
            <person name="Carninci P."/>
            <person name="Kasukawa T."/>
            <person name="Katayama S."/>
            <person name="Gough J."/>
            <person name="Frith M.C."/>
            <person name="Maeda N."/>
            <person name="Oyama R."/>
            <person name="Ravasi T."/>
            <person name="Lenhard B."/>
            <person name="Wells C."/>
            <person name="Kodzius R."/>
            <person name="Shimokawa K."/>
            <person name="Bajic V.B."/>
            <person name="Brenner S.E."/>
            <person name="Batalov S."/>
            <person name="Forrest A.R."/>
            <person name="Zavolan M."/>
            <person name="Davis M.J."/>
            <person name="Wilming L.G."/>
            <person name="Aidinis V."/>
            <person name="Allen J.E."/>
            <person name="Ambesi-Impiombato A."/>
            <person name="Apweiler R."/>
            <person name="Aturaliya R.N."/>
            <person name="Bailey T.L."/>
            <person name="Bansal M."/>
            <person name="Baxter L."/>
            <person name="Beisel K.W."/>
            <person name="Bersano T."/>
            <person name="Bono H."/>
            <person name="Chalk A.M."/>
            <person name="Chiu K.P."/>
            <person name="Choudhary V."/>
            <person name="Christoffels A."/>
            <person name="Clutterbuck D.R."/>
            <person name="Crowe M.L."/>
            <person name="Dalla E."/>
            <person name="Dalrymple B.P."/>
            <person name="de Bono B."/>
            <person name="Della Gatta G."/>
            <person name="di Bernardo D."/>
            <person name="Down T."/>
            <person name="Engstrom P."/>
            <person name="Fagiolini M."/>
            <person name="Faulkner G."/>
            <person name="Fletcher C.F."/>
            <person name="Fukushima T."/>
            <person name="Furuno M."/>
            <person name="Futaki S."/>
            <person name="Gariboldi M."/>
            <person name="Georgii-Hemming P."/>
            <person name="Gingeras T.R."/>
            <person name="Gojobori T."/>
            <person name="Green R.E."/>
            <person name="Gustincich S."/>
            <person name="Harbers M."/>
            <person name="Hayashi Y."/>
            <person name="Hensch T.K."/>
            <person name="Hirokawa N."/>
            <person name="Hill D."/>
            <person name="Huminiecki L."/>
            <person name="Iacono M."/>
            <person name="Ikeo K."/>
            <person name="Iwama A."/>
            <person name="Ishikawa T."/>
            <person name="Jakt M."/>
            <person name="Kanapin A."/>
            <person name="Katoh M."/>
            <person name="Kawasawa Y."/>
            <person name="Kelso J."/>
            <person name="Kitamura H."/>
            <person name="Kitano H."/>
            <person name="Kollias G."/>
            <person name="Krishnan S.P."/>
            <person name="Kruger A."/>
            <person name="Kummerfeld S.K."/>
            <person name="Kurochkin I.V."/>
            <person name="Lareau L.F."/>
            <person name="Lazarevic D."/>
            <person name="Lipovich L."/>
            <person name="Liu J."/>
            <person name="Liuni S."/>
            <person name="McWilliam S."/>
            <person name="Madan Babu M."/>
            <person name="Madera M."/>
            <person name="Marchionni L."/>
            <person name="Matsuda H."/>
            <person name="Matsuzawa S."/>
            <person name="Miki H."/>
            <person name="Mignone F."/>
            <person name="Miyake S."/>
            <person name="Morris K."/>
            <person name="Mottagui-Tabar S."/>
            <person name="Mulder N."/>
            <person name="Nakano N."/>
            <person name="Nakauchi H."/>
            <person name="Ng P."/>
            <person name="Nilsson R."/>
            <person name="Nishiguchi S."/>
            <person name="Nishikawa S."/>
            <person name="Nori F."/>
            <person name="Ohara O."/>
            <person name="Okazaki Y."/>
            <person name="Orlando V."/>
            <person name="Pang K.C."/>
            <person name="Pavan W.J."/>
            <person name="Pavesi G."/>
            <person name="Pesole G."/>
            <person name="Petrovsky N."/>
            <person name="Piazza S."/>
            <person name="Reed J."/>
            <person name="Reid J.F."/>
            <person name="Ring B.Z."/>
            <person name="Ringwald M."/>
            <person name="Rost B."/>
            <person name="Ruan Y."/>
            <person name="Salzberg S.L."/>
            <person name="Sandelin A."/>
            <person name="Schneider C."/>
            <person name="Schoenbach C."/>
            <person name="Sekiguchi K."/>
            <person name="Semple C.A."/>
            <person name="Seno S."/>
            <person name="Sessa L."/>
            <person name="Sheng Y."/>
            <person name="Shibata Y."/>
            <person name="Shimada H."/>
            <person name="Shimada K."/>
            <person name="Silva D."/>
            <person name="Sinclair B."/>
            <person name="Sperling S."/>
            <person name="Stupka E."/>
            <person name="Sugiura K."/>
            <person name="Sultana R."/>
            <person name="Takenaka Y."/>
            <person name="Taki K."/>
            <person name="Tammoja K."/>
            <person name="Tan S.L."/>
            <person name="Tang S."/>
            <person name="Taylor M.S."/>
            <person name="Tegner J."/>
            <person name="Teichmann S.A."/>
            <person name="Ueda H.R."/>
            <person name="van Nimwegen E."/>
            <person name="Verardo R."/>
            <person name="Wei C.L."/>
            <person name="Yagi K."/>
            <person name="Yamanishi H."/>
            <person name="Zabarovsky E."/>
            <person name="Zhu S."/>
            <person name="Zimmer A."/>
            <person name="Hide W."/>
            <person name="Bult C."/>
            <person name="Grimmond S.M."/>
            <person name="Teasdale R.D."/>
            <person name="Liu E.T."/>
            <person name="Brusic V."/>
            <person name="Quackenbush J."/>
            <person name="Wahlestedt C."/>
            <person name="Mattick J.S."/>
            <person name="Hume D.A."/>
            <person name="Kai C."/>
            <person name="Sasaki D."/>
            <person name="Tomaru Y."/>
            <person name="Fukuda S."/>
            <person name="Kanamori-Katayama M."/>
            <person name="Suzuki M."/>
            <person name="Aoki J."/>
            <person name="Arakawa T."/>
            <person name="Iida J."/>
            <person name="Imamura K."/>
            <person name="Itoh M."/>
            <person name="Kato T."/>
            <person name="Kawaji H."/>
            <person name="Kawagashira N."/>
            <person name="Kawashima T."/>
            <person name="Kojima M."/>
            <person name="Kondo S."/>
            <person name="Konno H."/>
            <person name="Nakano K."/>
            <person name="Ninomiya N."/>
            <person name="Nishio T."/>
            <person name="Okada M."/>
            <person name="Plessy C."/>
            <person name="Shibata K."/>
            <person name="Shiraki T."/>
            <person name="Suzuki S."/>
            <person name="Tagami M."/>
            <person name="Waki K."/>
            <person name="Watahiki A."/>
            <person name="Okamura-Oho Y."/>
            <person name="Suzuki H."/>
            <person name="Kawai J."/>
            <person name="Hayashizaki Y."/>
        </authorList>
    </citation>
    <scope>NUCLEOTIDE SEQUENCE [LARGE SCALE MRNA] (ISOFORM 2)</scope>
    <source>
        <strain>C57BL/6J</strain>
        <tissue>Colon</tissue>
    </source>
</reference>
<reference evidence="17" key="3">
    <citation type="journal article" date="2002" name="Genes Dev.">
        <title>IRE1-mediated unconventional mRNA splicing and S2P-mediated ATF6 cleavage merge to regulate XBP1 in signaling the unfolded protein response.</title>
        <authorList>
            <person name="Lee K."/>
            <person name="Tirasophon W."/>
            <person name="Shen X."/>
            <person name="Michalak M."/>
            <person name="Prywes R."/>
            <person name="Okada T."/>
            <person name="Yoshida H."/>
            <person name="Mori K."/>
            <person name="Kaufman R.J."/>
        </authorList>
    </citation>
    <scope>FUNCTION</scope>
    <scope>ENDORIBONUCLEASE ACTIVITY</scope>
    <scope>SUBCELLULAR LOCATION</scope>
</reference>
<reference key="4">
    <citation type="journal article" date="2002" name="Nature">
        <title>IRE1 couples endoplasmic reticulum load to secretory capacity by processing the XBP-1 mRNA.</title>
        <authorList>
            <person name="Calfon M."/>
            <person name="Zeng H."/>
            <person name="Urano F."/>
            <person name="Till J.H."/>
            <person name="Hubbard S.R."/>
            <person name="Harding H.P."/>
            <person name="Clark S.G."/>
            <person name="Ron D."/>
        </authorList>
    </citation>
    <scope>FUNCTION</scope>
    <scope>ENDORIBONUCLEASE ACTIVITY</scope>
</reference>
<reference key="5">
    <citation type="journal article" date="2008" name="J. Biol. Chem.">
        <title>AIP1 is critical in transducing IRE1-mediated endoplasmic reticulum stress response.</title>
        <authorList>
            <person name="Luo D."/>
            <person name="He Y."/>
            <person name="Zhang H."/>
            <person name="Yu L."/>
            <person name="Chen H."/>
            <person name="Xu Z."/>
            <person name="Tang S."/>
            <person name="Urano F."/>
            <person name="Min W."/>
        </authorList>
    </citation>
    <scope>INTERACTION WITH DAB2IP AND TRAF2</scope>
</reference>
<reference key="6">
    <citation type="journal article" date="2018" name="Mol. Cell">
        <title>Coordination between Two Branches of the Unfolded Protein Response Determines Apoptotic Cell Fate.</title>
        <authorList>
            <person name="Chang T.K."/>
            <person name="Lawrence D.A."/>
            <person name="Lu M."/>
            <person name="Tan J."/>
            <person name="Harnoss J.M."/>
            <person name="Marsters S.A."/>
            <person name="Liu P."/>
            <person name="Sandoval W."/>
            <person name="Martin S.E."/>
            <person name="Ashkenazi A."/>
        </authorList>
    </citation>
    <scope>TISSUE SPECIFICITY</scope>
    <scope>PHOSPHORYLATION</scope>
</reference>
<reference key="7">
    <citation type="journal article" date="2022" name="Mol. Carcinog.">
        <title>TGFbeta1 regulates HRas-mediated activation of IRE1alpha through the PERK-RPAP2 axis in keratinocytes.</title>
        <authorList>
            <person name="Mogre S."/>
            <person name="Blazanin N."/>
            <person name="Walsh H."/>
            <person name="Ibinson J."/>
            <person name="Minnich C."/>
            <person name="Andrew Hu C.C."/>
            <person name="Glick A.B."/>
        </authorList>
    </citation>
    <scope>PHOSPHORYLATION AT SER-729</scope>
</reference>
<reference key="8">
    <citation type="journal article" date="2023" name="Cell Rep.">
        <title>MANF regulates neuronal survival and UPR through its ER-located receptor IRE1alpha.</title>
        <authorList>
            <person name="Kovaleva V."/>
            <person name="Yu L.Y."/>
            <person name="Ivanova L."/>
            <person name="Shpironok O."/>
            <person name="Nam J."/>
            <person name="Eesmaa A."/>
            <person name="Kumpula E.P."/>
            <person name="Sakson S."/>
            <person name="Toots U."/>
            <person name="Ustav M."/>
            <person name="Huiskonen J.T."/>
            <person name="Voutilainen M.H."/>
            <person name="Lindholm P."/>
            <person name="Karelson M."/>
            <person name="Saarma M."/>
        </authorList>
    </citation>
    <scope>PHOSPHORYLATION AT SER-724</scope>
</reference>
<reference evidence="19 20 21" key="9">
    <citation type="journal article" date="2014" name="Nat. Commun.">
        <title>Structure and mechanism of action of the hydroxy-aryl-aldehyde class of IRE1 endoribonuclease inhibitors.</title>
        <authorList>
            <person name="Sanches M."/>
            <person name="Duffy N.M."/>
            <person name="Talukdar M."/>
            <person name="Thevakumaran N."/>
            <person name="Chiovitti D."/>
            <person name="Canny M.D."/>
            <person name="Lee K."/>
            <person name="Kurinov I."/>
            <person name="Uehling D."/>
            <person name="Al-awar R."/>
            <person name="Poda G."/>
            <person name="Prakesch M."/>
            <person name="Wilson B."/>
            <person name="Tam V."/>
            <person name="Schweitzer C."/>
            <person name="Toro A."/>
            <person name="Lucas J.L."/>
            <person name="Vuga D."/>
            <person name="Lehmann L."/>
            <person name="Durocher D."/>
            <person name="Zeng Q."/>
            <person name="Patterson J.B."/>
            <person name="Sicheri F."/>
        </authorList>
    </citation>
    <scope>X-RAY CRYSTALLOGRAPHY (2.90 ANGSTROMS) OF 550-977 IN COMPLEX WITH ADP AND MAGNESIUM</scope>
    <scope>FUNCTION</scope>
    <scope>CATALYTIC ACTIVITY</scope>
    <scope>ACTIVITY REGULATION</scope>
    <scope>AUTOPHOSPHORYLATION</scope>
    <scope>COFACTOR</scope>
    <scope>MUTAGENESIS OF PHE-889; TYR-892; ASN-906; LYS-907 AND HIS-910</scope>
</reference>
<gene>
    <name evidence="18" type="primary">Ern1</name>
    <name evidence="15" type="synonym">Ire1</name>
</gene>
<accession>Q9EQY0</accession>
<accession>Q9D340</accession>
<name>ERN1_MOUSE</name>
<organism>
    <name type="scientific">Mus musculus</name>
    <name type="common">Mouse</name>
    <dbReference type="NCBI Taxonomy" id="10090"/>
    <lineage>
        <taxon>Eukaryota</taxon>
        <taxon>Metazoa</taxon>
        <taxon>Chordata</taxon>
        <taxon>Craniata</taxon>
        <taxon>Vertebrata</taxon>
        <taxon>Euteleostomi</taxon>
        <taxon>Mammalia</taxon>
        <taxon>Eutheria</taxon>
        <taxon>Euarchontoglires</taxon>
        <taxon>Glires</taxon>
        <taxon>Rodentia</taxon>
        <taxon>Myomorpha</taxon>
        <taxon>Muroidea</taxon>
        <taxon>Muridae</taxon>
        <taxon>Murinae</taxon>
        <taxon>Mus</taxon>
        <taxon>Mus</taxon>
    </lineage>
</organism>
<protein>
    <recommendedName>
        <fullName evidence="17">Serine/threonine-protein kinase/endoribonuclease IRE1</fullName>
    </recommendedName>
    <alternativeName>
        <fullName evidence="15">Endoplasmic reticulum-to-nucleus signaling 1</fullName>
    </alternativeName>
    <alternativeName>
        <fullName evidence="15">Inositol-requiring protein 1</fullName>
    </alternativeName>
    <alternativeName>
        <fullName evidence="15">Ire1-alpha</fullName>
        <shortName evidence="15">IRE1a</shortName>
    </alternativeName>
    <domain>
        <recommendedName>
            <fullName>Serine/threonine-protein kinase</fullName>
            <ecNumber evidence="11">2.7.11.1</ecNumber>
        </recommendedName>
    </domain>
    <domain>
        <recommendedName>
            <fullName>Endoribonuclease</fullName>
            <ecNumber evidence="9 11">3.1.26.-</ecNumber>
        </recommendedName>
    </domain>
</protein>
<proteinExistence type="evidence at protein level"/>
<feature type="signal peptide" evidence="3">
    <location>
        <begin position="1"/>
        <end position="20"/>
    </location>
</feature>
<feature type="chain" id="PRO_0000024328" description="Serine/threonine-protein kinase/endoribonuclease IRE1">
    <location>
        <begin position="21"/>
        <end position="977"/>
    </location>
</feature>
<feature type="topological domain" description="Lumenal" evidence="3">
    <location>
        <begin position="21"/>
        <end position="445"/>
    </location>
</feature>
<feature type="transmembrane region" description="Helical" evidence="3">
    <location>
        <begin position="446"/>
        <end position="466"/>
    </location>
</feature>
<feature type="topological domain" description="Cytoplasmic" evidence="3">
    <location>
        <begin position="467"/>
        <end position="977"/>
    </location>
</feature>
<feature type="domain" description="Protein kinase" evidence="4">
    <location>
        <begin position="571"/>
        <end position="832"/>
    </location>
</feature>
<feature type="domain" description="KEN" evidence="5">
    <location>
        <begin position="835"/>
        <end position="963"/>
    </location>
</feature>
<feature type="region of interest" description="Disordered" evidence="7">
    <location>
        <begin position="498"/>
        <end position="559"/>
    </location>
</feature>
<feature type="region of interest" description="Interacts with hydroxy-aryl-aldehyde inhibitors" evidence="11">
    <location>
        <begin position="906"/>
        <end position="907"/>
    </location>
</feature>
<feature type="compositionally biased region" description="Low complexity" evidence="7">
    <location>
        <begin position="513"/>
        <end position="551"/>
    </location>
</feature>
<feature type="active site" description="Proton acceptor; for protein kinase activity" evidence="2 4 6">
    <location>
        <position position="688"/>
    </location>
</feature>
<feature type="binding site" evidence="4 11 21">
    <location>
        <begin position="577"/>
        <end position="585"/>
    </location>
    <ligand>
        <name>ATP</name>
        <dbReference type="ChEBI" id="CHEBI:30616"/>
    </ligand>
</feature>
<feature type="binding site" evidence="4 11 19 20 21">
    <location>
        <position position="599"/>
    </location>
    <ligand>
        <name>ATP</name>
        <dbReference type="ChEBI" id="CHEBI:30616"/>
    </ligand>
</feature>
<feature type="binding site" evidence="11 19 20 21">
    <location>
        <begin position="643"/>
        <end position="645"/>
    </location>
    <ligand>
        <name>ATP</name>
        <dbReference type="ChEBI" id="CHEBI:30616"/>
    </ligand>
</feature>
<feature type="binding site" evidence="11 19 20 21">
    <location>
        <begin position="690"/>
        <end position="693"/>
    </location>
    <ligand>
        <name>ATP</name>
        <dbReference type="ChEBI" id="CHEBI:30616"/>
    </ligand>
</feature>
<feature type="binding site" evidence="11 19 20 21">
    <location>
        <position position="711"/>
    </location>
    <ligand>
        <name>ATP</name>
        <dbReference type="ChEBI" id="CHEBI:30616"/>
    </ligand>
</feature>
<feature type="site" description="Interacts with hydroxy-aryl-aldehyde inhibitors" evidence="11">
    <location>
        <position position="892"/>
    </location>
</feature>
<feature type="modified residue" description="Phosphoserine" evidence="14">
    <location>
        <position position="724"/>
    </location>
</feature>
<feature type="modified residue" description="Phosphoserine" evidence="13">
    <location>
        <position position="729"/>
    </location>
</feature>
<feature type="glycosylation site" description="N-linked (GlcNAc...) asparagine" evidence="3">
    <location>
        <position position="178"/>
    </location>
</feature>
<feature type="splice variant" id="VSP_050794" description="In isoform 2." evidence="16">
    <original>INI</original>
    <variation>SGK</variation>
    <location>
        <begin position="406"/>
        <end position="408"/>
    </location>
</feature>
<feature type="splice variant" id="VSP_050795" description="In isoform 2." evidence="16">
    <location>
        <begin position="409"/>
        <end position="977"/>
    </location>
</feature>
<feature type="mutagenesis site" description="Abolishes endoribonuclease activity." evidence="11">
    <original>F</original>
    <variation>A</variation>
    <location>
        <position position="889"/>
    </location>
</feature>
<feature type="mutagenesis site" description="Abolishes endoribonuclease activity." evidence="11">
    <original>Y</original>
    <variation>A</variation>
    <location>
        <position position="892"/>
    </location>
</feature>
<feature type="mutagenesis site" description="Abolishes endoribonuclease activity." evidence="11">
    <original>N</original>
    <variation>A</variation>
    <location>
        <position position="906"/>
    </location>
</feature>
<feature type="mutagenesis site" description="Abolishes endoribonuclease activity." evidence="11">
    <original>K</original>
    <variation>A</variation>
    <location>
        <position position="907"/>
    </location>
</feature>
<feature type="mutagenesis site" description="Abolishes endoribonuclease activity." evidence="11">
    <original>H</original>
    <variation>A</variation>
    <location>
        <position position="910"/>
    </location>
</feature>
<feature type="strand" evidence="22">
    <location>
        <begin position="570"/>
        <end position="579"/>
    </location>
</feature>
<feature type="strand" evidence="22">
    <location>
        <begin position="581"/>
        <end position="583"/>
    </location>
</feature>
<feature type="strand" evidence="22">
    <location>
        <begin position="585"/>
        <end position="594"/>
    </location>
</feature>
<feature type="strand" evidence="22">
    <location>
        <begin position="597"/>
        <end position="601"/>
    </location>
</feature>
<feature type="turn" evidence="22">
    <location>
        <begin position="603"/>
        <end position="605"/>
    </location>
</feature>
<feature type="strand" evidence="22">
    <location>
        <begin position="606"/>
        <end position="608"/>
    </location>
</feature>
<feature type="helix" evidence="22">
    <location>
        <begin position="610"/>
        <end position="617"/>
    </location>
</feature>
<feature type="strand" evidence="22">
    <location>
        <begin position="628"/>
        <end position="634"/>
    </location>
</feature>
<feature type="strand" evidence="22">
    <location>
        <begin position="637"/>
        <end position="642"/>
    </location>
</feature>
<feature type="strand" evidence="22">
    <location>
        <begin position="646"/>
        <end position="648"/>
    </location>
</feature>
<feature type="helix" evidence="22">
    <location>
        <begin position="649"/>
        <end position="654"/>
    </location>
</feature>
<feature type="helix" evidence="22">
    <location>
        <begin position="665"/>
        <end position="680"/>
    </location>
</feature>
<feature type="turn" evidence="22">
    <location>
        <begin position="681"/>
        <end position="683"/>
    </location>
</feature>
<feature type="helix" evidence="22">
    <location>
        <begin position="691"/>
        <end position="693"/>
    </location>
</feature>
<feature type="strand" evidence="22">
    <location>
        <begin position="694"/>
        <end position="696"/>
    </location>
</feature>
<feature type="strand" evidence="22">
    <location>
        <begin position="707"/>
        <end position="709"/>
    </location>
</feature>
<feature type="strand" evidence="22">
    <location>
        <begin position="713"/>
        <end position="716"/>
    </location>
</feature>
<feature type="turn" evidence="24">
    <location>
        <begin position="735"/>
        <end position="737"/>
    </location>
</feature>
<feature type="helix" evidence="22">
    <location>
        <begin position="740"/>
        <end position="742"/>
    </location>
</feature>
<feature type="helix" evidence="22">
    <location>
        <begin position="753"/>
        <end position="768"/>
    </location>
</feature>
<feature type="turn" evidence="23">
    <location>
        <begin position="769"/>
        <end position="771"/>
    </location>
</feature>
<feature type="turn" evidence="22">
    <location>
        <begin position="778"/>
        <end position="780"/>
    </location>
</feature>
<feature type="helix" evidence="22">
    <location>
        <begin position="781"/>
        <end position="787"/>
    </location>
</feature>
<feature type="strand" evidence="24">
    <location>
        <begin position="797"/>
        <end position="799"/>
    </location>
</feature>
<feature type="helix" evidence="22">
    <location>
        <begin position="800"/>
        <end position="812"/>
    </location>
</feature>
<feature type="helix" evidence="22">
    <location>
        <begin position="817"/>
        <end position="819"/>
    </location>
</feature>
<feature type="helix" evidence="22">
    <location>
        <begin position="823"/>
        <end position="828"/>
    </location>
</feature>
<feature type="helix" evidence="22">
    <location>
        <begin position="830"/>
        <end position="832"/>
    </location>
</feature>
<feature type="helix" evidence="22">
    <location>
        <begin position="835"/>
        <end position="849"/>
    </location>
</feature>
<feature type="strand" evidence="22">
    <location>
        <begin position="854"/>
        <end position="856"/>
    </location>
</feature>
<feature type="helix" evidence="22">
    <location>
        <begin position="857"/>
        <end position="862"/>
    </location>
</feature>
<feature type="helix" evidence="22">
    <location>
        <begin position="867"/>
        <end position="870"/>
    </location>
</feature>
<feature type="helix" evidence="22">
    <location>
        <begin position="874"/>
        <end position="877"/>
    </location>
</feature>
<feature type="helix" evidence="22">
    <location>
        <begin position="880"/>
        <end position="887"/>
    </location>
</feature>
<feature type="helix" evidence="22">
    <location>
        <begin position="897"/>
        <end position="909"/>
    </location>
</feature>
<feature type="helix" evidence="22">
    <location>
        <begin position="911"/>
        <end position="913"/>
    </location>
</feature>
<feature type="helix" evidence="22">
    <location>
        <begin position="916"/>
        <end position="921"/>
    </location>
</feature>
<feature type="strand" evidence="23">
    <location>
        <begin position="924"/>
        <end position="926"/>
    </location>
</feature>
<feature type="helix" evidence="22">
    <location>
        <begin position="927"/>
        <end position="936"/>
    </location>
</feature>
<feature type="helix" evidence="22">
    <location>
        <begin position="938"/>
        <end position="947"/>
    </location>
</feature>
<feature type="helix" evidence="23">
    <location>
        <begin position="948"/>
        <end position="951"/>
    </location>
</feature>
<feature type="turn" evidence="22">
    <location>
        <begin position="954"/>
        <end position="956"/>
    </location>
</feature>
<feature type="helix" evidence="22">
    <location>
        <begin position="957"/>
        <end position="959"/>
    </location>
</feature>